<dbReference type="EMBL" id="AAHF01000004">
    <property type="protein sequence ID" value="EAL90990.1"/>
    <property type="molecule type" value="Genomic_DNA"/>
</dbReference>
<dbReference type="RefSeq" id="XP_753028.1">
    <property type="nucleotide sequence ID" value="XM_747935.1"/>
</dbReference>
<dbReference type="SMR" id="Q4WRE2"/>
<dbReference type="FunCoup" id="Q4WRE2">
    <property type="interactions" value="449"/>
</dbReference>
<dbReference type="STRING" id="330879.Q4WRE2"/>
<dbReference type="EnsemblFungi" id="EAL90990">
    <property type="protein sequence ID" value="EAL90990"/>
    <property type="gene ID" value="AFUA_1G16610"/>
</dbReference>
<dbReference type="GeneID" id="3510054"/>
<dbReference type="KEGG" id="afm:AFUA_1G16610"/>
<dbReference type="VEuPathDB" id="FungiDB:Afu1g16610"/>
<dbReference type="eggNOG" id="KOG4776">
    <property type="taxonomic scope" value="Eukaryota"/>
</dbReference>
<dbReference type="HOGENOM" id="CLU_062474_0_0_1"/>
<dbReference type="InParanoid" id="Q4WRE2"/>
<dbReference type="OMA" id="LDWAAYV"/>
<dbReference type="OrthoDB" id="445677at2759"/>
<dbReference type="Proteomes" id="UP000002530">
    <property type="component" value="Chromosome 1"/>
</dbReference>
<dbReference type="GO" id="GO:0005634">
    <property type="term" value="C:nucleus"/>
    <property type="evidence" value="ECO:0007669"/>
    <property type="project" value="UniProtKB-SubCell"/>
</dbReference>
<dbReference type="GO" id="GO:0006325">
    <property type="term" value="P:chromatin organization"/>
    <property type="evidence" value="ECO:0007669"/>
    <property type="project" value="UniProtKB-KW"/>
</dbReference>
<dbReference type="InterPro" id="IPR011421">
    <property type="entry name" value="BCNT-C"/>
</dbReference>
<dbReference type="InterPro" id="IPR027124">
    <property type="entry name" value="Swc5/CFDP1/2"/>
</dbReference>
<dbReference type="PANTHER" id="PTHR48295">
    <property type="entry name" value="CRANIOFACIAL DEVELOPMENT PROTEIN 1"/>
    <property type="match status" value="1"/>
</dbReference>
<dbReference type="PANTHER" id="PTHR48295:SF1">
    <property type="entry name" value="SWR1-COMPLEX PROTEIN 5"/>
    <property type="match status" value="1"/>
</dbReference>
<dbReference type="Pfam" id="PF07572">
    <property type="entry name" value="BCNT"/>
    <property type="match status" value="1"/>
</dbReference>
<dbReference type="PROSITE" id="PS51279">
    <property type="entry name" value="BCNT_C"/>
    <property type="match status" value="1"/>
</dbReference>
<proteinExistence type="inferred from homology"/>
<feature type="chain" id="PRO_0000212502" description="SWR1-complex protein 5">
    <location>
        <begin position="1"/>
        <end position="359"/>
    </location>
</feature>
<feature type="domain" description="BCNT-C" evidence="2">
    <location>
        <begin position="282"/>
        <end position="359"/>
    </location>
</feature>
<feature type="region of interest" description="Disordered" evidence="3">
    <location>
        <begin position="1"/>
        <end position="124"/>
    </location>
</feature>
<feature type="region of interest" description="Disordered" evidence="3">
    <location>
        <begin position="155"/>
        <end position="197"/>
    </location>
</feature>
<feature type="region of interest" description="Disordered" evidence="3">
    <location>
        <begin position="265"/>
        <end position="300"/>
    </location>
</feature>
<feature type="compositionally biased region" description="Acidic residues" evidence="3">
    <location>
        <begin position="12"/>
        <end position="48"/>
    </location>
</feature>
<feature type="compositionally biased region" description="Acidic residues" evidence="3">
    <location>
        <begin position="98"/>
        <end position="113"/>
    </location>
</feature>
<feature type="compositionally biased region" description="Basic and acidic residues" evidence="3">
    <location>
        <begin position="172"/>
        <end position="182"/>
    </location>
</feature>
<feature type="compositionally biased region" description="Polar residues" evidence="3">
    <location>
        <begin position="286"/>
        <end position="295"/>
    </location>
</feature>
<sequence>MASEPAATVADLDFDNEQYDSAEDEDFQLDPDQEDADLTGSDSDDEATEPAAKRRKTGPTKAATEDQELDSGDEAMIQKVKARKEGKQKGKKSQGTASDEDEDDVDFDDDDEGGPGGFVRTRAMRMRMQEERKPLAKIDGATVDVDAIWAQMNAPDSSAGILPSQTQAKDATPAKDENKNADTAEEQVLSPDSKPQYKEEMVKIKRTYKFAGEVITEEKIVPKDSAEAKLFLAKGESVETVTDADVEHAANAKDALKLRRPLRKISRFDPNPTGTIKKSWEKQPTAGITGQTENISGPKINTVEKSRLDWAAYVDQAGIKDELKEHSKAKEGFLGRMDFLNRVVAKREEERRNARLKGL</sequence>
<name>SWC5_ASPFU</name>
<evidence type="ECO:0000250" key="1"/>
<evidence type="ECO:0000255" key="2">
    <source>
        <dbReference type="PROSITE-ProRule" id="PRU00610"/>
    </source>
</evidence>
<evidence type="ECO:0000256" key="3">
    <source>
        <dbReference type="SAM" id="MobiDB-lite"/>
    </source>
</evidence>
<evidence type="ECO:0000305" key="4"/>
<accession>Q4WRE2</accession>
<reference key="1">
    <citation type="journal article" date="2005" name="Nature">
        <title>Genomic sequence of the pathogenic and allergenic filamentous fungus Aspergillus fumigatus.</title>
        <authorList>
            <person name="Nierman W.C."/>
            <person name="Pain A."/>
            <person name="Anderson M.J."/>
            <person name="Wortman J.R."/>
            <person name="Kim H.S."/>
            <person name="Arroyo J."/>
            <person name="Berriman M."/>
            <person name="Abe K."/>
            <person name="Archer D.B."/>
            <person name="Bermejo C."/>
            <person name="Bennett J.W."/>
            <person name="Bowyer P."/>
            <person name="Chen D."/>
            <person name="Collins M."/>
            <person name="Coulsen R."/>
            <person name="Davies R."/>
            <person name="Dyer P.S."/>
            <person name="Farman M.L."/>
            <person name="Fedorova N."/>
            <person name="Fedorova N.D."/>
            <person name="Feldblyum T.V."/>
            <person name="Fischer R."/>
            <person name="Fosker N."/>
            <person name="Fraser A."/>
            <person name="Garcia J.L."/>
            <person name="Garcia M.J."/>
            <person name="Goble A."/>
            <person name="Goldman G.H."/>
            <person name="Gomi K."/>
            <person name="Griffith-Jones S."/>
            <person name="Gwilliam R."/>
            <person name="Haas B.J."/>
            <person name="Haas H."/>
            <person name="Harris D.E."/>
            <person name="Horiuchi H."/>
            <person name="Huang J."/>
            <person name="Humphray S."/>
            <person name="Jimenez J."/>
            <person name="Keller N."/>
            <person name="Khouri H."/>
            <person name="Kitamoto K."/>
            <person name="Kobayashi T."/>
            <person name="Konzack S."/>
            <person name="Kulkarni R."/>
            <person name="Kumagai T."/>
            <person name="Lafton A."/>
            <person name="Latge J.-P."/>
            <person name="Li W."/>
            <person name="Lord A."/>
            <person name="Lu C."/>
            <person name="Majoros W.H."/>
            <person name="May G.S."/>
            <person name="Miller B.L."/>
            <person name="Mohamoud Y."/>
            <person name="Molina M."/>
            <person name="Monod M."/>
            <person name="Mouyna I."/>
            <person name="Mulligan S."/>
            <person name="Murphy L.D."/>
            <person name="O'Neil S."/>
            <person name="Paulsen I."/>
            <person name="Penalva M.A."/>
            <person name="Pertea M."/>
            <person name="Price C."/>
            <person name="Pritchard B.L."/>
            <person name="Quail M.A."/>
            <person name="Rabbinowitsch E."/>
            <person name="Rawlins N."/>
            <person name="Rajandream M.A."/>
            <person name="Reichard U."/>
            <person name="Renauld H."/>
            <person name="Robson G.D."/>
            <person name="Rodriguez de Cordoba S."/>
            <person name="Rodriguez-Pena J.M."/>
            <person name="Ronning C.M."/>
            <person name="Rutter S."/>
            <person name="Salzberg S.L."/>
            <person name="Sanchez M."/>
            <person name="Sanchez-Ferrero J.C."/>
            <person name="Saunders D."/>
            <person name="Seeger K."/>
            <person name="Squares R."/>
            <person name="Squares S."/>
            <person name="Takeuchi M."/>
            <person name="Tekaia F."/>
            <person name="Turner G."/>
            <person name="Vazquez de Aldana C.R."/>
            <person name="Weidman J."/>
            <person name="White O."/>
            <person name="Woodward J.R."/>
            <person name="Yu J.-H."/>
            <person name="Fraser C.M."/>
            <person name="Galagan J.E."/>
            <person name="Asai K."/>
            <person name="Machida M."/>
            <person name="Hall N."/>
            <person name="Barrell B.G."/>
            <person name="Denning D.W."/>
        </authorList>
    </citation>
    <scope>NUCLEOTIDE SEQUENCE [LARGE SCALE GENOMIC DNA]</scope>
    <source>
        <strain>ATCC MYA-4609 / CBS 101355 / FGSC A1100 / Af293</strain>
    </source>
</reference>
<protein>
    <recommendedName>
        <fullName>SWR1-complex protein 5</fullName>
    </recommendedName>
</protein>
<gene>
    <name type="primary">swc5</name>
    <name type="ORF">AFUA_1G16610</name>
</gene>
<organism>
    <name type="scientific">Aspergillus fumigatus (strain ATCC MYA-4609 / CBS 101355 / FGSC A1100 / Af293)</name>
    <name type="common">Neosartorya fumigata</name>
    <dbReference type="NCBI Taxonomy" id="330879"/>
    <lineage>
        <taxon>Eukaryota</taxon>
        <taxon>Fungi</taxon>
        <taxon>Dikarya</taxon>
        <taxon>Ascomycota</taxon>
        <taxon>Pezizomycotina</taxon>
        <taxon>Eurotiomycetes</taxon>
        <taxon>Eurotiomycetidae</taxon>
        <taxon>Eurotiales</taxon>
        <taxon>Aspergillaceae</taxon>
        <taxon>Aspergillus</taxon>
        <taxon>Aspergillus subgen. Fumigati</taxon>
    </lineage>
</organism>
<comment type="function">
    <text evidence="1">Component of the SWR1 complex which mediates the ATP-dependent exchange of histone H2A for the H2A variant HZT1 leading to transcriptional regulation of selected genes by chromatin remodeling. Involved in chromosome stability (By similarity).</text>
</comment>
<comment type="subunit">
    <text evidence="1">Component of the SWR1 chromatin remodeling complex.</text>
</comment>
<comment type="subcellular location">
    <subcellularLocation>
        <location evidence="1">Nucleus</location>
    </subcellularLocation>
</comment>
<comment type="similarity">
    <text evidence="4">Belongs to the SWC5 family.</text>
</comment>
<keyword id="KW-0010">Activator</keyword>
<keyword id="KW-0156">Chromatin regulator</keyword>
<keyword id="KW-0539">Nucleus</keyword>
<keyword id="KW-1185">Reference proteome</keyword>
<keyword id="KW-0804">Transcription</keyword>
<keyword id="KW-0805">Transcription regulation</keyword>